<reference key="1">
    <citation type="journal article" date="1983" name="J. Mol. Evol.">
        <title>Evolution of alpha q- and beta-tubulin genes as inferred by the nucleotide sequences of sea urchin cDNA clones.</title>
        <authorList>
            <person name="Alexandraki D."/>
            <person name="Ruderman J.V."/>
        </authorList>
    </citation>
    <scope>NUCLEOTIDE SEQUENCE [MRNA] (CLONE P-BETA-3 AND 80-177 OF P-BETA-1)</scope>
</reference>
<name>TBB_LYTPI</name>
<keyword id="KW-0963">Cytoplasm</keyword>
<keyword id="KW-0206">Cytoskeleton</keyword>
<keyword id="KW-0342">GTP-binding</keyword>
<keyword id="KW-0493">Microtubule</keyword>
<keyword id="KW-0547">Nucleotide-binding</keyword>
<proteinExistence type="evidence at transcript level"/>
<evidence type="ECO:0000250" key="1">
    <source>
        <dbReference type="UniProtKB" id="P68363"/>
    </source>
</evidence>
<evidence type="ECO:0000256" key="2">
    <source>
        <dbReference type="SAM" id="MobiDB-lite"/>
    </source>
</evidence>
<evidence type="ECO:0000305" key="3"/>
<dbReference type="EMBL" id="M32427">
    <property type="protein sequence ID" value="AAA85475.1"/>
    <property type="molecule type" value="mRNA"/>
</dbReference>
<dbReference type="PIR" id="A02975">
    <property type="entry name" value="UBURB"/>
</dbReference>
<dbReference type="SMR" id="P02556"/>
<dbReference type="OrthoDB" id="1662883at2759"/>
<dbReference type="GO" id="GO:0005737">
    <property type="term" value="C:cytoplasm"/>
    <property type="evidence" value="ECO:0007669"/>
    <property type="project" value="UniProtKB-KW"/>
</dbReference>
<dbReference type="GO" id="GO:0005874">
    <property type="term" value="C:microtubule"/>
    <property type="evidence" value="ECO:0007669"/>
    <property type="project" value="UniProtKB-KW"/>
</dbReference>
<dbReference type="GO" id="GO:0005525">
    <property type="term" value="F:GTP binding"/>
    <property type="evidence" value="ECO:0007669"/>
    <property type="project" value="UniProtKB-KW"/>
</dbReference>
<dbReference type="GO" id="GO:0003924">
    <property type="term" value="F:GTPase activity"/>
    <property type="evidence" value="ECO:0007669"/>
    <property type="project" value="InterPro"/>
</dbReference>
<dbReference type="GO" id="GO:0005200">
    <property type="term" value="F:structural constituent of cytoskeleton"/>
    <property type="evidence" value="ECO:0007669"/>
    <property type="project" value="InterPro"/>
</dbReference>
<dbReference type="GO" id="GO:0007017">
    <property type="term" value="P:microtubule-based process"/>
    <property type="evidence" value="ECO:0007669"/>
    <property type="project" value="InterPro"/>
</dbReference>
<dbReference type="FunFam" id="1.10.287.600:FF:000006">
    <property type="entry name" value="Tubulin beta chain"/>
    <property type="match status" value="1"/>
</dbReference>
<dbReference type="FunFam" id="3.30.1330.20:FF:000002">
    <property type="entry name" value="Tubulin beta chain"/>
    <property type="match status" value="1"/>
</dbReference>
<dbReference type="Gene3D" id="1.10.287.600">
    <property type="entry name" value="Helix hairpin bin"/>
    <property type="match status" value="1"/>
</dbReference>
<dbReference type="Gene3D" id="3.30.1330.20">
    <property type="entry name" value="Tubulin/FtsZ, C-terminal domain"/>
    <property type="match status" value="1"/>
</dbReference>
<dbReference type="InterPro" id="IPR002453">
    <property type="entry name" value="Beta_tubulin"/>
</dbReference>
<dbReference type="InterPro" id="IPR008280">
    <property type="entry name" value="Tub_FtsZ_C"/>
</dbReference>
<dbReference type="InterPro" id="IPR037103">
    <property type="entry name" value="Tubulin/FtsZ-like_C"/>
</dbReference>
<dbReference type="InterPro" id="IPR018316">
    <property type="entry name" value="Tubulin/FtsZ_2-layer-sand-dom"/>
</dbReference>
<dbReference type="InterPro" id="IPR023123">
    <property type="entry name" value="Tubulin_C"/>
</dbReference>
<dbReference type="PANTHER" id="PTHR36527">
    <property type="entry name" value="OS01G0282866 PROTEIN"/>
    <property type="match status" value="1"/>
</dbReference>
<dbReference type="PANTHER" id="PTHR36527:SF8">
    <property type="entry name" value="TUBULIN BETA-4B CHAIN"/>
    <property type="match status" value="1"/>
</dbReference>
<dbReference type="Pfam" id="PF03953">
    <property type="entry name" value="Tubulin_C"/>
    <property type="match status" value="1"/>
</dbReference>
<dbReference type="PRINTS" id="PR01163">
    <property type="entry name" value="BETATUBULIN"/>
</dbReference>
<dbReference type="SMART" id="SM00865">
    <property type="entry name" value="Tubulin_C"/>
    <property type="match status" value="1"/>
</dbReference>
<dbReference type="SUPFAM" id="SSF55307">
    <property type="entry name" value="Tubulin C-terminal domain-like"/>
    <property type="match status" value="1"/>
</dbReference>
<protein>
    <recommendedName>
        <fullName>Tubulin beta chain</fullName>
    </recommendedName>
    <alternativeName>
        <fullName>Beta-tubulin</fullName>
    </alternativeName>
</protein>
<organism>
    <name type="scientific">Lytechinus pictus</name>
    <name type="common">Painted sea urchin</name>
    <dbReference type="NCBI Taxonomy" id="7653"/>
    <lineage>
        <taxon>Eukaryota</taxon>
        <taxon>Metazoa</taxon>
        <taxon>Echinodermata</taxon>
        <taxon>Eleutherozoa</taxon>
        <taxon>Echinozoa</taxon>
        <taxon>Echinoidea</taxon>
        <taxon>Euechinoidea</taxon>
        <taxon>Echinacea</taxon>
        <taxon>Temnopleuroida</taxon>
        <taxon>Toxopneustidae</taxon>
        <taxon>Lytechinus</taxon>
    </lineage>
</organism>
<comment type="function">
    <text>Tubulin is the major constituent of microtubules, a cylinder consisting of laterally associated linear protofilaments composed of alpha- and beta-tubulin heterodimers. Microtubules grow by the addition of GTP-tubulin dimers to the microtubule end, where a stabilizing cap forms. Below the cap, tubulin dimers are in GDP-bound state, owing to GTPase activity of alpha-tubulin.</text>
</comment>
<comment type="cofactor">
    <cofactor evidence="1">
        <name>Mg(2+)</name>
        <dbReference type="ChEBI" id="CHEBI:18420"/>
    </cofactor>
</comment>
<comment type="subunit">
    <text>Dimer of alpha and beta chains. A typical microtubule is a hollow water-filled tube with an outer diameter of 25 nm and an inner diameter of 15 nM. Alpha-beta heterodimers associate head-to-tail to form protofilaments running lengthwise along the microtubule wall with the beta-tubulin subunit facing the microtubule plus end conferring a structural polarity. Microtubules usually have 13 protofilaments but different protofilament numbers can be found in some organisms and specialized cells.</text>
</comment>
<comment type="subcellular location">
    <subcellularLocation>
        <location>Cytoplasm</location>
        <location>Cytoskeleton</location>
    </subcellularLocation>
</comment>
<comment type="similarity">
    <text evidence="3">Belongs to the tubulin family.</text>
</comment>
<sequence>FAPLTSRGSQQYRALTVSELTQQMFDAKNMMAACDPRHGRYLTVAAIFRGRMSMKEVDEQMLNVQNKNSSYFVEWIPNNVKTAVCDIPPRGLKMSATFIGNSTAIQELFKRISEQFTAMFRRKAFLHWYTGEGMDEMEFTEAESNMNDLVSEYQQYQDATAEEEGEFDEEEGDEEAA</sequence>
<feature type="chain" id="PRO_0000048301" description="Tubulin beta chain">
    <location>
        <begin position="1" status="less than"/>
        <end position="177"/>
    </location>
</feature>
<feature type="region of interest" description="Disordered" evidence="2">
    <location>
        <begin position="156"/>
        <end position="177"/>
    </location>
</feature>
<feature type="compositionally biased region" description="Acidic residues" evidence="2">
    <location>
        <begin position="160"/>
        <end position="177"/>
    </location>
</feature>
<feature type="sequence variant" description="In clone P-beta-1.">
    <original>G</original>
    <variation>GE</variation>
    <location>
        <position position="172"/>
    </location>
</feature>
<feature type="non-terminal residue">
    <location>
        <position position="1"/>
    </location>
</feature>
<accession>P02556</accession>